<gene>
    <name type="primary">PEX2</name>
    <name evidence="10" type="synonym">PAF1</name>
    <name type="synonym">PMP35</name>
    <name type="synonym">PXMP3</name>
</gene>
<feature type="chain" id="PRO_0000056368" description="Peroxisome biogenesis factor 2">
    <location>
        <begin position="1"/>
        <end position="304"/>
    </location>
</feature>
<feature type="topological domain" description="Peroxisomal matrix" evidence="1">
    <location>
        <begin position="1"/>
        <end position="14"/>
    </location>
</feature>
<feature type="transmembrane region" description="Helical; Name=TM1" evidence="1">
    <location>
        <begin position="15"/>
        <end position="41"/>
    </location>
</feature>
<feature type="topological domain" description="Cytoplasmic" evidence="1">
    <location>
        <begin position="42"/>
        <end position="47"/>
    </location>
</feature>
<feature type="transmembrane region" description="Helical; Name=TM2" evidence="1">
    <location>
        <begin position="48"/>
        <end position="73"/>
    </location>
</feature>
<feature type="topological domain" description="Peroxisomal matrix" evidence="1">
    <location>
        <begin position="74"/>
        <end position="97"/>
    </location>
</feature>
<feature type="transmembrane region" description="Helical; Name=TM3" evidence="1">
    <location>
        <begin position="98"/>
        <end position="124"/>
    </location>
</feature>
<feature type="topological domain" description="Cytoplasmic" evidence="1">
    <location>
        <begin position="125"/>
        <end position="132"/>
    </location>
</feature>
<feature type="transmembrane region" description="Helical; Name=TM4" evidence="1">
    <location>
        <begin position="133"/>
        <end position="159"/>
    </location>
</feature>
<feature type="topological domain" description="Peroxisomal matrix" evidence="1">
    <location>
        <begin position="160"/>
        <end position="186"/>
    </location>
</feature>
<feature type="transmembrane region" description="Helical; Name=TM5" evidence="1">
    <location>
        <begin position="187"/>
        <end position="210"/>
    </location>
</feature>
<feature type="topological domain" description="Cytoplasmic" evidence="1">
    <location>
        <begin position="211"/>
        <end position="304"/>
    </location>
</feature>
<feature type="zinc finger region" description="RING-type" evidence="5">
    <location>
        <begin position="243"/>
        <end position="283"/>
    </location>
</feature>
<feature type="binding site" evidence="1">
    <location>
        <position position="243"/>
    </location>
    <ligand>
        <name>Zn(2+)</name>
        <dbReference type="ChEBI" id="CHEBI:29105"/>
        <label>1</label>
    </ligand>
</feature>
<feature type="binding site" evidence="1">
    <location>
        <position position="246"/>
    </location>
    <ligand>
        <name>Zn(2+)</name>
        <dbReference type="ChEBI" id="CHEBI:29105"/>
        <label>1</label>
    </ligand>
</feature>
<feature type="binding site" evidence="1">
    <location>
        <position position="258"/>
    </location>
    <ligand>
        <name>Zn(2+)</name>
        <dbReference type="ChEBI" id="CHEBI:29105"/>
        <label>2</label>
    </ligand>
</feature>
<feature type="binding site" evidence="1">
    <location>
        <position position="260"/>
    </location>
    <ligand>
        <name>Zn(2+)</name>
        <dbReference type="ChEBI" id="CHEBI:29105"/>
        <label>2</label>
    </ligand>
</feature>
<feature type="binding site" evidence="1">
    <location>
        <position position="263"/>
    </location>
    <ligand>
        <name>Zn(2+)</name>
        <dbReference type="ChEBI" id="CHEBI:29105"/>
        <label>1</label>
    </ligand>
</feature>
<feature type="binding site" evidence="1">
    <location>
        <position position="266"/>
    </location>
    <ligand>
        <name>Zn(2+)</name>
        <dbReference type="ChEBI" id="CHEBI:29105"/>
        <label>1</label>
    </ligand>
</feature>
<feature type="binding site" evidence="1">
    <location>
        <position position="279"/>
    </location>
    <ligand>
        <name>Zn(2+)</name>
        <dbReference type="ChEBI" id="CHEBI:29105"/>
        <label>2</label>
    </ligand>
</feature>
<feature type="binding site" evidence="1">
    <location>
        <position position="282"/>
    </location>
    <ligand>
        <name>Zn(2+)</name>
        <dbReference type="ChEBI" id="CHEBI:29105"/>
        <label>2</label>
    </ligand>
</feature>
<feature type="mutagenesis site" description="Loss of function mutation present in Chinese hamster ovary (CHO) cell line Z78/C; leads to defective peroxisome assembly. Peroxisome deficiency leads to impaired cholesterol sensing and synthesis. Peroxisome deficiency can be restored by overexpression of ABCD3/PMP70." evidence="6 7 8 9">
    <original>C</original>
    <variation>Y</variation>
    <location>
        <position position="246"/>
    </location>
</feature>
<evidence type="ECO:0000250" key="1">
    <source>
        <dbReference type="UniProtKB" id="G2Q1C9"/>
    </source>
</evidence>
<evidence type="ECO:0000250" key="2">
    <source>
        <dbReference type="UniProtKB" id="P28328"/>
    </source>
</evidence>
<evidence type="ECO:0000250" key="3">
    <source>
        <dbReference type="UniProtKB" id="P32800"/>
    </source>
</evidence>
<evidence type="ECO:0000255" key="4"/>
<evidence type="ECO:0000255" key="5">
    <source>
        <dbReference type="PROSITE-ProRule" id="PRU00175"/>
    </source>
</evidence>
<evidence type="ECO:0000269" key="6">
    <source>
    </source>
</evidence>
<evidence type="ECO:0000269" key="7">
    <source>
    </source>
</evidence>
<evidence type="ECO:0000269" key="8">
    <source>
    </source>
</evidence>
<evidence type="ECO:0000269" key="9">
    <source>
    </source>
</evidence>
<evidence type="ECO:0000303" key="10">
    <source>
    </source>
</evidence>
<evidence type="ECO:0000305" key="11"/>
<accession>Q06438</accession>
<comment type="function">
    <text evidence="2 3">E3 ubiquitin-protein ligase component of a retrotranslocation channel required for peroxisome organization by mediating export of the PEX5 receptor from peroxisomes to the cytosol, thereby promoting PEX5 recycling (By similarity). The retrotranslocation channel is composed of PEX2, PEX10 and PEX12; each subunit contributing transmembrane segments that coassemble into an open channel that specifically allows the passage of PEX5 through the peroxisomal membrane. PEX2 also regulates peroxisome organization by acting as a E3 ubiquitin-protein ligase. PEX2 ubiquitinates PEX5 during its passage through the retrotranslocation channel: catalyzes monoubiquitination of PEX5 at 'Cys-11', a modification that acts as a signal for PEX5 extraction into the cytosol (By similarity). Required for pexophagy in response to starvation by mediating ubiquitination of peroxisomal proteins, such as PEX5 and ABCD3/PMP70. Also involved in the response to reactive oxygen species (ROS) by mediating 'Lys-48'-linked polyubiquitination and subsequent degradation of PNPLA2/ATGL, thereby regulating lipolysis (By similarity).</text>
</comment>
<comment type="catalytic activity">
    <reaction evidence="3">
        <text>[E2 ubiquitin-conjugating enzyme]-S-ubiquitinyl-L-cysteine + [acceptor protein]-L-cysteine = [E2 ubiquitin-conjugating enzyme]-L-cysteine + [acceptor protein]-S-ubiquitinyl-L-cysteine.</text>
        <dbReference type="EC" id="2.3.2.36"/>
    </reaction>
</comment>
<comment type="catalytic activity">
    <reaction evidence="2">
        <text>S-ubiquitinyl-[E2 ubiquitin-conjugating enzyme]-L-cysteine + [acceptor protein]-L-lysine = [E2 ubiquitin-conjugating enzyme]-L-cysteine + N(6)-ubiquitinyl-[acceptor protein]-L-lysine.</text>
        <dbReference type="EC" id="2.3.2.27"/>
    </reaction>
</comment>
<comment type="pathway">
    <text evidence="2">Protein modification; protein ubiquitination.</text>
</comment>
<comment type="subunit">
    <text evidence="2">Component of the PEX2-PEX10-PEX12 retrotranslocation channel, composed of PEX2, PEX10 and PEX12.</text>
</comment>
<comment type="subcellular location">
    <subcellularLocation>
        <location evidence="2">Peroxisome membrane</location>
        <topology evidence="4">Multi-pass membrane protein</topology>
    </subcellularLocation>
</comment>
<comment type="domain">
    <text evidence="1">The three subunits of the retrotranslocation channel (PEX2, PEX10 and PEX12) coassemble in the membrane into a channel with an open 10 Angstrom pore. The RING-type zinc-fingers that catalyze PEX5 receptor ubiquitination are positioned above the pore on the cytosolic side of the complex.</text>
</comment>
<comment type="PTM">
    <text evidence="2">Forms intramolecular and intermolecular disulfide bonds in response to reactive oxygen species (ROS), promoting higher stability.</text>
</comment>
<comment type="similarity">
    <text evidence="11">Belongs to the pex2/pex10/pex12 family.</text>
</comment>
<sequence length="304" mass="34795">MAGREKTKSANRVLRISQLDALELNKALEQLVWSQFTQCFHGFKPGLLARFEPEVKACLWLFLWRFTIYSKNATVGQSVLNIQYKNDFSSNSRYQPPSKNQKLWYAVCTIGGRWLEERCYDLFRNRHLASFGKVKQCMNVMVGLLKLGELINFLIFLQKGKFATLTERLLGIHSVFCKPQNIREVGFDYMNRELLWHGFAEFLIFLLPLINIQKFKAKLSSWCIPLTGAASSDSALASSGKECALCGEWPTMPHTIGCEHVFCYYCVKSSFLFDMYFTCPKCGIEVHSVQPLKSGIEMSEVNAL</sequence>
<name>PEX2_CRIGR</name>
<reference key="1">
    <citation type="journal article" date="1993" name="J. Biol. Chem.">
        <title>Peroxisome-deficient Chinese hamster ovary cells with point mutations in peroxisome assembly factor-1.</title>
        <authorList>
            <person name="Thieringer R."/>
            <person name="Raetz C.R.H."/>
        </authorList>
    </citation>
    <scope>NUCLEOTIDE SEQUENCE [MRNA]</scope>
    <scope>MUTAGENESIS OF CYS-246</scope>
    <source>
        <tissue>Ovary</tissue>
    </source>
</reference>
<reference key="2">
    <citation type="journal article" date="1994" name="Mol. Cell. Biol.">
        <title>Peroxisome assembly factor 1: nonsense mutation in a peroxisome-deficient Chinese hamster ovary cell mutant and deletion analysis.</title>
        <authorList>
            <person name="Tsukamoto T."/>
            <person name="Shimozawa N."/>
            <person name="Fujiki Y."/>
        </authorList>
    </citation>
    <scope>NUCLEOTIDE SEQUENCE [MRNA]</scope>
    <scope>MUTAGENESIS OF CYS-246</scope>
</reference>
<reference key="3">
    <citation type="journal article" date="1998" name="Eur. J. Cell Biol.">
        <title>Restoration of PEX2 peroxisome assembly defects by overexpression of PMP70.</title>
        <authorList>
            <person name="Gaertner J."/>
            <person name="Brosius U."/>
            <person name="Obie C."/>
            <person name="Watkins P.A."/>
            <person name="Valle D."/>
        </authorList>
    </citation>
    <scope>MUTAGENESIS OF CYS-246</scope>
</reference>
<reference key="4">
    <citation type="journal article" date="2020" name="Front. Cell Dev. Biol.">
        <title>Functional peroxisomes are essential for efficient cholesterol sensing and synthesis.</title>
        <authorList>
            <person name="Charles K.N."/>
            <person name="Shackelford J.E."/>
            <person name="Faust P.L."/>
            <person name="Fliesler S.J."/>
            <person name="Stangl H."/>
            <person name="Kovacs W.J."/>
        </authorList>
    </citation>
    <scope>MUTAGENESIS OF CYS-246</scope>
</reference>
<protein>
    <recommendedName>
        <fullName evidence="11">Peroxisome biogenesis factor 2</fullName>
        <ecNumber evidence="3">2.3.2.27</ecNumber>
        <ecNumber evidence="3">2.3.2.36</ecNumber>
    </recommendedName>
    <alternativeName>
        <fullName evidence="11">Peroxin-2</fullName>
    </alternativeName>
    <alternativeName>
        <fullName>Peroxisomal membrane protein 3</fullName>
    </alternativeName>
    <alternativeName>
        <fullName evidence="10">Peroxisome assembly factor 1</fullName>
        <shortName evidence="10">PAF-1</shortName>
    </alternativeName>
</protein>
<keyword id="KW-1015">Disulfide bond</keyword>
<keyword id="KW-0472">Membrane</keyword>
<keyword id="KW-0479">Metal-binding</keyword>
<keyword id="KW-0576">Peroxisome</keyword>
<keyword id="KW-0653">Protein transport</keyword>
<keyword id="KW-0808">Transferase</keyword>
<keyword id="KW-0812">Transmembrane</keyword>
<keyword id="KW-1133">Transmembrane helix</keyword>
<keyword id="KW-0813">Transport</keyword>
<keyword id="KW-0833">Ubl conjugation pathway</keyword>
<keyword id="KW-0862">Zinc</keyword>
<keyword id="KW-0863">Zinc-finger</keyword>
<organism>
    <name type="scientific">Cricetulus griseus</name>
    <name type="common">Chinese hamster</name>
    <name type="synonym">Cricetulus barabensis griseus</name>
    <dbReference type="NCBI Taxonomy" id="10029"/>
    <lineage>
        <taxon>Eukaryota</taxon>
        <taxon>Metazoa</taxon>
        <taxon>Chordata</taxon>
        <taxon>Craniata</taxon>
        <taxon>Vertebrata</taxon>
        <taxon>Euteleostomi</taxon>
        <taxon>Mammalia</taxon>
        <taxon>Eutheria</taxon>
        <taxon>Euarchontoglires</taxon>
        <taxon>Glires</taxon>
        <taxon>Rodentia</taxon>
        <taxon>Myomorpha</taxon>
        <taxon>Muroidea</taxon>
        <taxon>Cricetidae</taxon>
        <taxon>Cricetinae</taxon>
        <taxon>Cricetulus</taxon>
    </lineage>
</organism>
<dbReference type="EC" id="2.3.2.27" evidence="3"/>
<dbReference type="EC" id="2.3.2.36" evidence="3"/>
<dbReference type="EMBL" id="Z17220">
    <property type="protein sequence ID" value="CAA78929.1"/>
    <property type="molecule type" value="mRNA"/>
</dbReference>
<dbReference type="EMBL" id="D30618">
    <property type="protein sequence ID" value="BAA06308.1"/>
    <property type="molecule type" value="mRNA"/>
</dbReference>
<dbReference type="PIR" id="A45989">
    <property type="entry name" value="A45989"/>
</dbReference>
<dbReference type="RefSeq" id="NP_001230964.1">
    <property type="nucleotide sequence ID" value="NM_001244035.1"/>
</dbReference>
<dbReference type="RefSeq" id="XP_007644647.1">
    <property type="nucleotide sequence ID" value="XM_007646457.2"/>
</dbReference>
<dbReference type="SMR" id="Q06438"/>
<dbReference type="PaxDb" id="10029-NP_001230964.1"/>
<dbReference type="Ensembl" id="ENSCGRT00001018576.1">
    <property type="protein sequence ID" value="ENSCGRP00001014339.1"/>
    <property type="gene ID" value="ENSCGRG00001015243.1"/>
</dbReference>
<dbReference type="GeneID" id="100689047"/>
<dbReference type="KEGG" id="cge:100689047"/>
<dbReference type="CTD" id="5828"/>
<dbReference type="eggNOG" id="KOG2879">
    <property type="taxonomic scope" value="Eukaryota"/>
</dbReference>
<dbReference type="GeneTree" id="ENSGT00390000001846"/>
<dbReference type="OMA" id="WHGLMEL"/>
<dbReference type="OrthoDB" id="1701437at2759"/>
<dbReference type="UniPathway" id="UPA00143"/>
<dbReference type="Proteomes" id="UP000694386">
    <property type="component" value="Unplaced"/>
</dbReference>
<dbReference type="Proteomes" id="UP001108280">
    <property type="component" value="Chromosome 2"/>
</dbReference>
<dbReference type="GO" id="GO:0016593">
    <property type="term" value="C:Cdc73/Paf1 complex"/>
    <property type="evidence" value="ECO:0007669"/>
    <property type="project" value="Ensembl"/>
</dbReference>
<dbReference type="GO" id="GO:0005778">
    <property type="term" value="C:peroxisomal membrane"/>
    <property type="evidence" value="ECO:0000250"/>
    <property type="project" value="UniProtKB"/>
</dbReference>
<dbReference type="GO" id="GO:0061630">
    <property type="term" value="F:ubiquitin protein ligase activity"/>
    <property type="evidence" value="ECO:0000250"/>
    <property type="project" value="UniProtKB"/>
</dbReference>
<dbReference type="GO" id="GO:0008270">
    <property type="term" value="F:zinc ion binding"/>
    <property type="evidence" value="ECO:0007669"/>
    <property type="project" value="UniProtKB-KW"/>
</dbReference>
<dbReference type="GO" id="GO:0034614">
    <property type="term" value="P:cellular response to reactive oxygen species"/>
    <property type="evidence" value="ECO:0007669"/>
    <property type="project" value="Ensembl"/>
</dbReference>
<dbReference type="GO" id="GO:0006635">
    <property type="term" value="P:fatty acid beta-oxidation"/>
    <property type="evidence" value="ECO:0007669"/>
    <property type="project" value="Ensembl"/>
</dbReference>
<dbReference type="GO" id="GO:0050680">
    <property type="term" value="P:negative regulation of epithelial cell proliferation"/>
    <property type="evidence" value="ECO:0007669"/>
    <property type="project" value="Ensembl"/>
</dbReference>
<dbReference type="GO" id="GO:0048147">
    <property type="term" value="P:negative regulation of fibroblast proliferation"/>
    <property type="evidence" value="ECO:0007669"/>
    <property type="project" value="Ensembl"/>
</dbReference>
<dbReference type="GO" id="GO:0007031">
    <property type="term" value="P:peroxisome organization"/>
    <property type="evidence" value="ECO:0000315"/>
    <property type="project" value="UniProtKB"/>
</dbReference>
<dbReference type="GO" id="GO:0000425">
    <property type="term" value="P:pexophagy"/>
    <property type="evidence" value="ECO:0000250"/>
    <property type="project" value="UniProtKB"/>
</dbReference>
<dbReference type="GO" id="GO:0031648">
    <property type="term" value="P:protein destabilization"/>
    <property type="evidence" value="ECO:0007669"/>
    <property type="project" value="Ensembl"/>
</dbReference>
<dbReference type="GO" id="GO:0016562">
    <property type="term" value="P:protein import into peroxisome matrix, receptor recycling"/>
    <property type="evidence" value="ECO:0000250"/>
    <property type="project" value="UniProtKB"/>
</dbReference>
<dbReference type="GO" id="GO:0006513">
    <property type="term" value="P:protein monoubiquitination"/>
    <property type="evidence" value="ECO:0007669"/>
    <property type="project" value="Ensembl"/>
</dbReference>
<dbReference type="GO" id="GO:1990928">
    <property type="term" value="P:response to amino acid starvation"/>
    <property type="evidence" value="ECO:0000250"/>
    <property type="project" value="UniProtKB"/>
</dbReference>
<dbReference type="GO" id="GO:0000038">
    <property type="term" value="P:very long-chain fatty acid metabolic process"/>
    <property type="evidence" value="ECO:0007669"/>
    <property type="project" value="Ensembl"/>
</dbReference>
<dbReference type="CDD" id="cd16526">
    <property type="entry name" value="RING-HC_PEX2"/>
    <property type="match status" value="1"/>
</dbReference>
<dbReference type="FunFam" id="3.30.40.10:FF:000480">
    <property type="entry name" value="Peroxisome biogenesis factor 2"/>
    <property type="match status" value="1"/>
</dbReference>
<dbReference type="Gene3D" id="3.30.40.10">
    <property type="entry name" value="Zinc/RING finger domain, C3HC4 (zinc finger)"/>
    <property type="match status" value="1"/>
</dbReference>
<dbReference type="InterPro" id="IPR025654">
    <property type="entry name" value="PEX2/10"/>
</dbReference>
<dbReference type="InterPro" id="IPR006845">
    <property type="entry name" value="Pex_N"/>
</dbReference>
<dbReference type="InterPro" id="IPR045859">
    <property type="entry name" value="RING-HC_PEX2"/>
</dbReference>
<dbReference type="InterPro" id="IPR001841">
    <property type="entry name" value="Znf_RING"/>
</dbReference>
<dbReference type="InterPro" id="IPR013083">
    <property type="entry name" value="Znf_RING/FYVE/PHD"/>
</dbReference>
<dbReference type="InterPro" id="IPR017907">
    <property type="entry name" value="Znf_RING_CS"/>
</dbReference>
<dbReference type="PANTHER" id="PTHR48178">
    <property type="entry name" value="PEROXISOME BIOGENESIS FACTOR 2"/>
    <property type="match status" value="1"/>
</dbReference>
<dbReference type="PANTHER" id="PTHR48178:SF1">
    <property type="entry name" value="PEROXISOME BIOGENESIS FACTOR 2"/>
    <property type="match status" value="1"/>
</dbReference>
<dbReference type="Pfam" id="PF04757">
    <property type="entry name" value="Pex2_Pex12"/>
    <property type="match status" value="1"/>
</dbReference>
<dbReference type="SMART" id="SM00184">
    <property type="entry name" value="RING"/>
    <property type="match status" value="1"/>
</dbReference>
<dbReference type="SUPFAM" id="SSF57850">
    <property type="entry name" value="RING/U-box"/>
    <property type="match status" value="1"/>
</dbReference>
<dbReference type="PROSITE" id="PS00518">
    <property type="entry name" value="ZF_RING_1"/>
    <property type="match status" value="1"/>
</dbReference>
<dbReference type="PROSITE" id="PS50089">
    <property type="entry name" value="ZF_RING_2"/>
    <property type="match status" value="1"/>
</dbReference>
<proteinExistence type="evidence at protein level"/>